<protein>
    <recommendedName>
        <fullName evidence="1">33 kDa chaperonin</fullName>
    </recommendedName>
    <alternativeName>
        <fullName evidence="1">Heat shock protein 33 homolog</fullName>
        <shortName evidence="1">HSP33</shortName>
    </alternativeName>
</protein>
<proteinExistence type="inferred from homology"/>
<comment type="function">
    <text evidence="1">Redox regulated molecular chaperone. Protects both thermally unfolding and oxidatively damaged proteins from irreversible aggregation. Plays an important role in the bacterial defense system toward oxidative stress.</text>
</comment>
<comment type="subcellular location">
    <subcellularLocation>
        <location evidence="1">Cytoplasm</location>
    </subcellularLocation>
</comment>
<comment type="PTM">
    <text evidence="1">Under oxidizing conditions two disulfide bonds are formed involving the reactive cysteines. Under reducing conditions zinc is bound to the reactive cysteines and the protein is inactive.</text>
</comment>
<comment type="similarity">
    <text evidence="1">Belongs to the HSP33 family.</text>
</comment>
<accession>B0KI04</accession>
<reference key="1">
    <citation type="submission" date="2008-01" db="EMBL/GenBank/DDBJ databases">
        <title>Complete sequence of Pseudomonas putida GB-1.</title>
        <authorList>
            <consortium name="US DOE Joint Genome Institute"/>
            <person name="Copeland A."/>
            <person name="Lucas S."/>
            <person name="Lapidus A."/>
            <person name="Barry K."/>
            <person name="Glavina del Rio T."/>
            <person name="Dalin E."/>
            <person name="Tice H."/>
            <person name="Pitluck S."/>
            <person name="Bruce D."/>
            <person name="Goodwin L."/>
            <person name="Chertkov O."/>
            <person name="Brettin T."/>
            <person name="Detter J.C."/>
            <person name="Han C."/>
            <person name="Kuske C.R."/>
            <person name="Schmutz J."/>
            <person name="Larimer F."/>
            <person name="Land M."/>
            <person name="Hauser L."/>
            <person name="Kyrpides N."/>
            <person name="Kim E."/>
            <person name="McCarthy J.K."/>
            <person name="Richardson P."/>
        </authorList>
    </citation>
    <scope>NUCLEOTIDE SEQUENCE [LARGE SCALE GENOMIC DNA]</scope>
    <source>
        <strain>GB-1</strain>
    </source>
</reference>
<sequence>MSDLPDTDFTQRFIFDERDVRGEWVSLDDSYAAVLARHEYPQPVKALLGELMAATALLVGAMKFDGLLILQARSAGPIPLLMVECSSDCEIRGMARYEAEQIPADASLSQLMPDGHLTLTIDPVKGQRYQGTVDLDGANLSECFTNYFIQSQQLNTRFWLNAEGGKARGLLLQQLPRDRQPDDEEREDSWQHVVALAKTLKPEEWAEGNETLLHRLYHEDAVRLFDIQPLRFNCSCSRERSGNALVSLGEHDAKALVEECGGTVEIDCQFCNERYFFDASDVAQLFAGGGTDVASETRH</sequence>
<organism>
    <name type="scientific">Pseudomonas putida (strain GB-1)</name>
    <dbReference type="NCBI Taxonomy" id="76869"/>
    <lineage>
        <taxon>Bacteria</taxon>
        <taxon>Pseudomonadati</taxon>
        <taxon>Pseudomonadota</taxon>
        <taxon>Gammaproteobacteria</taxon>
        <taxon>Pseudomonadales</taxon>
        <taxon>Pseudomonadaceae</taxon>
        <taxon>Pseudomonas</taxon>
    </lineage>
</organism>
<gene>
    <name evidence="1" type="primary">hslO</name>
    <name type="ordered locus">PputGB1_0277</name>
</gene>
<feature type="chain" id="PRO_1000076084" description="33 kDa chaperonin">
    <location>
        <begin position="1"/>
        <end position="299"/>
    </location>
</feature>
<feature type="disulfide bond" description="Redox-active" evidence="1">
    <location>
        <begin position="234"/>
        <end position="236"/>
    </location>
</feature>
<feature type="disulfide bond" description="Redox-active" evidence="1">
    <location>
        <begin position="268"/>
        <end position="271"/>
    </location>
</feature>
<name>HSLO_PSEPG</name>
<keyword id="KW-0143">Chaperone</keyword>
<keyword id="KW-0963">Cytoplasm</keyword>
<keyword id="KW-1015">Disulfide bond</keyword>
<keyword id="KW-0676">Redox-active center</keyword>
<keyword id="KW-0862">Zinc</keyword>
<evidence type="ECO:0000255" key="1">
    <source>
        <dbReference type="HAMAP-Rule" id="MF_00117"/>
    </source>
</evidence>
<dbReference type="EMBL" id="CP000926">
    <property type="protein sequence ID" value="ABY96190.1"/>
    <property type="molecule type" value="Genomic_DNA"/>
</dbReference>
<dbReference type="RefSeq" id="WP_012270057.1">
    <property type="nucleotide sequence ID" value="NC_010322.1"/>
</dbReference>
<dbReference type="SMR" id="B0KI04"/>
<dbReference type="KEGG" id="ppg:PputGB1_0277"/>
<dbReference type="eggNOG" id="COG1281">
    <property type="taxonomic scope" value="Bacteria"/>
</dbReference>
<dbReference type="HOGENOM" id="CLU_054493_0_0_6"/>
<dbReference type="Proteomes" id="UP000002157">
    <property type="component" value="Chromosome"/>
</dbReference>
<dbReference type="GO" id="GO:0005737">
    <property type="term" value="C:cytoplasm"/>
    <property type="evidence" value="ECO:0007669"/>
    <property type="project" value="UniProtKB-SubCell"/>
</dbReference>
<dbReference type="GO" id="GO:0044183">
    <property type="term" value="F:protein folding chaperone"/>
    <property type="evidence" value="ECO:0007669"/>
    <property type="project" value="TreeGrafter"/>
</dbReference>
<dbReference type="GO" id="GO:0051082">
    <property type="term" value="F:unfolded protein binding"/>
    <property type="evidence" value="ECO:0007669"/>
    <property type="project" value="UniProtKB-UniRule"/>
</dbReference>
<dbReference type="GO" id="GO:0042026">
    <property type="term" value="P:protein refolding"/>
    <property type="evidence" value="ECO:0007669"/>
    <property type="project" value="TreeGrafter"/>
</dbReference>
<dbReference type="CDD" id="cd00498">
    <property type="entry name" value="Hsp33"/>
    <property type="match status" value="1"/>
</dbReference>
<dbReference type="Gene3D" id="1.10.287.480">
    <property type="entry name" value="helix hairpin bin"/>
    <property type="match status" value="1"/>
</dbReference>
<dbReference type="Gene3D" id="3.55.30.10">
    <property type="entry name" value="Hsp33 domain"/>
    <property type="match status" value="1"/>
</dbReference>
<dbReference type="Gene3D" id="3.90.1280.10">
    <property type="entry name" value="HSP33 redox switch-like"/>
    <property type="match status" value="1"/>
</dbReference>
<dbReference type="HAMAP" id="MF_00117">
    <property type="entry name" value="HslO"/>
    <property type="match status" value="1"/>
</dbReference>
<dbReference type="InterPro" id="IPR000397">
    <property type="entry name" value="Heat_shock_Hsp33"/>
</dbReference>
<dbReference type="InterPro" id="IPR016154">
    <property type="entry name" value="Heat_shock_Hsp33_C"/>
</dbReference>
<dbReference type="InterPro" id="IPR016153">
    <property type="entry name" value="Heat_shock_Hsp33_N"/>
</dbReference>
<dbReference type="InterPro" id="IPR023212">
    <property type="entry name" value="Hsp33_helix_hairpin_bin_dom_sf"/>
</dbReference>
<dbReference type="NCBIfam" id="NF001033">
    <property type="entry name" value="PRK00114.1"/>
    <property type="match status" value="1"/>
</dbReference>
<dbReference type="PANTHER" id="PTHR30111">
    <property type="entry name" value="33 KDA CHAPERONIN"/>
    <property type="match status" value="1"/>
</dbReference>
<dbReference type="PANTHER" id="PTHR30111:SF1">
    <property type="entry name" value="33 KDA CHAPERONIN"/>
    <property type="match status" value="1"/>
</dbReference>
<dbReference type="Pfam" id="PF01430">
    <property type="entry name" value="HSP33"/>
    <property type="match status" value="1"/>
</dbReference>
<dbReference type="PIRSF" id="PIRSF005261">
    <property type="entry name" value="Heat_shock_Hsp33"/>
    <property type="match status" value="1"/>
</dbReference>
<dbReference type="SUPFAM" id="SSF64397">
    <property type="entry name" value="Hsp33 domain"/>
    <property type="match status" value="1"/>
</dbReference>
<dbReference type="SUPFAM" id="SSF118352">
    <property type="entry name" value="HSP33 redox switch-like"/>
    <property type="match status" value="1"/>
</dbReference>